<gene>
    <name evidence="1" type="primary">TRX2</name>
    <name type="ordered locus">UL85</name>
</gene>
<accession>F5HIN9</accession>
<organism>
    <name type="scientific">Human cytomegalovirus (strain Merlin)</name>
    <name type="common">HHV-5</name>
    <name type="synonym">Human herpesvirus 5</name>
    <dbReference type="NCBI Taxonomy" id="295027"/>
    <lineage>
        <taxon>Viruses</taxon>
        <taxon>Duplodnaviria</taxon>
        <taxon>Heunggongvirae</taxon>
        <taxon>Peploviricota</taxon>
        <taxon>Herviviricetes</taxon>
        <taxon>Herpesvirales</taxon>
        <taxon>Orthoherpesviridae</taxon>
        <taxon>Betaherpesvirinae</taxon>
        <taxon>Cytomegalovirus</taxon>
        <taxon>Cytomegalovirus humanbeta5</taxon>
        <taxon>Human cytomegalovirus</taxon>
    </lineage>
</organism>
<reference key="1">
    <citation type="journal article" date="2004" name="J. Gen. Virol.">
        <title>Genetic content of wild-type human cytomegalovirus.</title>
        <authorList>
            <person name="Dolan A."/>
            <person name="Cunningham C."/>
            <person name="Hector R.D."/>
            <person name="Hassan-Walker A.F."/>
            <person name="Lee L."/>
            <person name="Addison C."/>
            <person name="Dargan D.J."/>
            <person name="McGeoch D.J."/>
            <person name="Gatherer D."/>
            <person name="Emery V.C."/>
            <person name="Griffiths P.D."/>
            <person name="Sinzger C."/>
            <person name="McSharry B.P."/>
            <person name="Wilkinson G.W.G."/>
            <person name="Davison A.J."/>
        </authorList>
    </citation>
    <scope>NUCLEOTIDE SEQUENCE [LARGE SCALE GENOMIC DNA]</scope>
</reference>
<feature type="chain" id="PRO_0000418257" description="Triplex capsid protein 2">
    <location>
        <begin position="1"/>
        <end position="306"/>
    </location>
</feature>
<evidence type="ECO:0000255" key="1">
    <source>
        <dbReference type="HAMAP-Rule" id="MF_04019"/>
    </source>
</evidence>
<protein>
    <recommendedName>
        <fullName evidence="1">Triplex capsid protein 2</fullName>
    </recommendedName>
</protein>
<dbReference type="EMBL" id="AY446894">
    <property type="protein sequence ID" value="AAR31637.1"/>
    <property type="molecule type" value="Genomic_DNA"/>
</dbReference>
<dbReference type="RefSeq" id="YP_081533.1">
    <property type="nucleotide sequence ID" value="NC_006273.2"/>
</dbReference>
<dbReference type="SMR" id="F5HIN9"/>
<dbReference type="BioGRID" id="1678069">
    <property type="interactions" value="1"/>
</dbReference>
<dbReference type="GeneID" id="3077516"/>
<dbReference type="KEGG" id="vg:3077516"/>
<dbReference type="Reactome" id="R-HSA-9609690">
    <property type="pathway name" value="HCMV Early Events"/>
</dbReference>
<dbReference type="Reactome" id="R-HSA-9610379">
    <property type="pathway name" value="HCMV Late Events"/>
</dbReference>
<dbReference type="Proteomes" id="UP000000938">
    <property type="component" value="Segment"/>
</dbReference>
<dbReference type="GO" id="GO:0042025">
    <property type="term" value="C:host cell nucleus"/>
    <property type="evidence" value="ECO:0007669"/>
    <property type="project" value="UniProtKB-SubCell"/>
</dbReference>
<dbReference type="GO" id="GO:0019028">
    <property type="term" value="C:viral capsid"/>
    <property type="evidence" value="ECO:0000304"/>
    <property type="project" value="Reactome"/>
</dbReference>
<dbReference type="GO" id="GO:0005198">
    <property type="term" value="F:structural molecule activity"/>
    <property type="evidence" value="ECO:0007669"/>
    <property type="project" value="InterPro"/>
</dbReference>
<dbReference type="HAMAP" id="MF_04019">
    <property type="entry name" value="HSV_TRX2"/>
    <property type="match status" value="1"/>
</dbReference>
<dbReference type="InterPro" id="IPR002690">
    <property type="entry name" value="Herpes_capsid_2"/>
</dbReference>
<dbReference type="Pfam" id="PF01802">
    <property type="entry name" value="Herpes_V23"/>
    <property type="match status" value="1"/>
</dbReference>
<proteinExistence type="inferred from homology"/>
<keyword id="KW-0167">Capsid protein</keyword>
<keyword id="KW-1048">Host nucleus</keyword>
<keyword id="KW-1185">Reference proteome</keyword>
<keyword id="KW-0946">Virion</keyword>
<sequence length="306" mass="34595">MAAMEANIFCTFDHKLSIADVGKLTKLVAAVVPIPQRLHLIKHYQLGLHQFVDHTRGYVRLRGLLRNMTLTLMRRVEGNQILLHVPTHGLLYTVLNTGPVTWEKGDALCVLPPLFHGPLARENLLTLGQWELVLPWIVPMPLALEINQRLLIMGLFSLDRSYEEVKAAVQQLQTITFRDATFTIPDPVIDQHLLIDMKTACLSMSMVANLASELTMTYVRKLALEDSSMLLVKCQELLMRLDRERSVGEPRTPARPQHVSPDDEIARLSALFVMLRQLDDLIREQVVFTVCDVSPDNKSATCIFKG</sequence>
<name>TRX2_HCMVM</name>
<organismHost>
    <name type="scientific">Homo sapiens</name>
    <name type="common">Human</name>
    <dbReference type="NCBI Taxonomy" id="9606"/>
</organismHost>
<comment type="function">
    <text evidence="1">Structural component of the T=16 icosahedral capsid. The capsid is composed of pentamers and hexamers of major capsid protein/MCP, which are linked together by heterotrimers called triplexes. These triplexes are formed by a single molecule of triplex protein 1/TRX1 and two copies of triplex protein 2/TRX2. Additionally, TRX1 is required for efficient transport of TRX2 to the nucleus, which is the site of capsid assembly.</text>
</comment>
<comment type="subunit">
    <text evidence="1">Interacts with TRX1 and major capisd protein/MCP.</text>
</comment>
<comment type="subcellular location">
    <subcellularLocation>
        <location evidence="1">Virion</location>
    </subcellularLocation>
    <subcellularLocation>
        <location evidence="1">Host nucleus</location>
    </subcellularLocation>
</comment>
<comment type="similarity">
    <text evidence="1">Belongs to the herpesviridae TRX2 protein family.</text>
</comment>